<reference key="1">
    <citation type="journal article" date="2003" name="Nat. Genet.">
        <title>Comparative analysis of the genome sequences of Bordetella pertussis, Bordetella parapertussis and Bordetella bronchiseptica.</title>
        <authorList>
            <person name="Parkhill J."/>
            <person name="Sebaihia M."/>
            <person name="Preston A."/>
            <person name="Murphy L.D."/>
            <person name="Thomson N.R."/>
            <person name="Harris D.E."/>
            <person name="Holden M.T.G."/>
            <person name="Churcher C.M."/>
            <person name="Bentley S.D."/>
            <person name="Mungall K.L."/>
            <person name="Cerdeno-Tarraga A.-M."/>
            <person name="Temple L."/>
            <person name="James K.D."/>
            <person name="Harris B."/>
            <person name="Quail M.A."/>
            <person name="Achtman M."/>
            <person name="Atkin R."/>
            <person name="Baker S."/>
            <person name="Basham D."/>
            <person name="Bason N."/>
            <person name="Cherevach I."/>
            <person name="Chillingworth T."/>
            <person name="Collins M."/>
            <person name="Cronin A."/>
            <person name="Davis P."/>
            <person name="Doggett J."/>
            <person name="Feltwell T."/>
            <person name="Goble A."/>
            <person name="Hamlin N."/>
            <person name="Hauser H."/>
            <person name="Holroyd S."/>
            <person name="Jagels K."/>
            <person name="Leather S."/>
            <person name="Moule S."/>
            <person name="Norberczak H."/>
            <person name="O'Neil S."/>
            <person name="Ormond D."/>
            <person name="Price C."/>
            <person name="Rabbinowitsch E."/>
            <person name="Rutter S."/>
            <person name="Sanders M."/>
            <person name="Saunders D."/>
            <person name="Seeger K."/>
            <person name="Sharp S."/>
            <person name="Simmonds M."/>
            <person name="Skelton J."/>
            <person name="Squares R."/>
            <person name="Squares S."/>
            <person name="Stevens K."/>
            <person name="Unwin L."/>
            <person name="Whitehead S."/>
            <person name="Barrell B.G."/>
            <person name="Maskell D.J."/>
        </authorList>
    </citation>
    <scope>NUCLEOTIDE SEQUENCE [LARGE SCALE GENOMIC DNA]</scope>
    <source>
        <strain>12822 / ATCC BAA-587 / NCTC 13253</strain>
    </source>
</reference>
<sequence>MPDMSQLKELPFSTLQFYATAPYPCSYLPGRQARSQVAAPGHLINTGTYSQLVEQGFRRSGLFTYRPHCDNCHACVPVRVDAARFEPNRTQRRAWRSHQALRAFVAELAWSPEHYDLYTRYQQGRHPGGGMDEDSRTQYAQFLLTTRVNTRLVKFRTPQGQLAMISIIDVLDDGLSSVYTFYDPDMAGSLGTYSILWQIEQCRTLDLPWLYLGYWIADSRKMAYKANFRPLQMHVDGAWRETPP</sequence>
<accession>Q7W4W7</accession>
<dbReference type="EC" id="2.3.2.29" evidence="1"/>
<dbReference type="EMBL" id="BX640433">
    <property type="protein sequence ID" value="CAE38823.1"/>
    <property type="molecule type" value="Genomic_DNA"/>
</dbReference>
<dbReference type="RefSeq" id="WP_010929116.1">
    <property type="nucleotide sequence ID" value="NC_002928.3"/>
</dbReference>
<dbReference type="SMR" id="Q7W4W7"/>
<dbReference type="GeneID" id="93205328"/>
<dbReference type="KEGG" id="bpa:BPP3539"/>
<dbReference type="HOGENOM" id="CLU_077607_0_0_4"/>
<dbReference type="Proteomes" id="UP000001421">
    <property type="component" value="Chromosome"/>
</dbReference>
<dbReference type="GO" id="GO:0005737">
    <property type="term" value="C:cytoplasm"/>
    <property type="evidence" value="ECO:0007669"/>
    <property type="project" value="UniProtKB-SubCell"/>
</dbReference>
<dbReference type="GO" id="GO:0004057">
    <property type="term" value="F:arginyl-tRNA--protein transferase activity"/>
    <property type="evidence" value="ECO:0007669"/>
    <property type="project" value="InterPro"/>
</dbReference>
<dbReference type="GO" id="GO:0008914">
    <property type="term" value="F:leucyl-tRNA--protein transferase activity"/>
    <property type="evidence" value="ECO:0007669"/>
    <property type="project" value="UniProtKB-UniRule"/>
</dbReference>
<dbReference type="GO" id="GO:0071596">
    <property type="term" value="P:ubiquitin-dependent protein catabolic process via the N-end rule pathway"/>
    <property type="evidence" value="ECO:0007669"/>
    <property type="project" value="InterPro"/>
</dbReference>
<dbReference type="HAMAP" id="MF_00689">
    <property type="entry name" value="Bpt"/>
    <property type="match status" value="1"/>
</dbReference>
<dbReference type="InterPro" id="IPR016181">
    <property type="entry name" value="Acyl_CoA_acyltransferase"/>
</dbReference>
<dbReference type="InterPro" id="IPR017138">
    <property type="entry name" value="Asp_Glu_LeuTrfase"/>
</dbReference>
<dbReference type="InterPro" id="IPR030700">
    <property type="entry name" value="N-end_Aminoacyl_Trfase"/>
</dbReference>
<dbReference type="InterPro" id="IPR007472">
    <property type="entry name" value="N-end_Aminoacyl_Trfase_C"/>
</dbReference>
<dbReference type="InterPro" id="IPR007471">
    <property type="entry name" value="N-end_Aminoacyl_Trfase_N"/>
</dbReference>
<dbReference type="NCBIfam" id="NF002341">
    <property type="entry name" value="PRK01305.1-1"/>
    <property type="match status" value="1"/>
</dbReference>
<dbReference type="NCBIfam" id="NF002342">
    <property type="entry name" value="PRK01305.1-3"/>
    <property type="match status" value="1"/>
</dbReference>
<dbReference type="NCBIfam" id="NF002346">
    <property type="entry name" value="PRK01305.2-3"/>
    <property type="match status" value="1"/>
</dbReference>
<dbReference type="PANTHER" id="PTHR21367">
    <property type="entry name" value="ARGININE-TRNA-PROTEIN TRANSFERASE 1"/>
    <property type="match status" value="1"/>
</dbReference>
<dbReference type="PANTHER" id="PTHR21367:SF1">
    <property type="entry name" value="ARGINYL-TRNA--PROTEIN TRANSFERASE 1"/>
    <property type="match status" value="1"/>
</dbReference>
<dbReference type="Pfam" id="PF04377">
    <property type="entry name" value="ATE_C"/>
    <property type="match status" value="1"/>
</dbReference>
<dbReference type="Pfam" id="PF04376">
    <property type="entry name" value="ATE_N"/>
    <property type="match status" value="1"/>
</dbReference>
<dbReference type="PIRSF" id="PIRSF037208">
    <property type="entry name" value="ATE_pro_prd"/>
    <property type="match status" value="1"/>
</dbReference>
<dbReference type="SUPFAM" id="SSF55729">
    <property type="entry name" value="Acyl-CoA N-acyltransferases (Nat)"/>
    <property type="match status" value="1"/>
</dbReference>
<protein>
    <recommendedName>
        <fullName evidence="1">Aspartate/glutamate leucyltransferase</fullName>
        <ecNumber evidence="1">2.3.2.29</ecNumber>
    </recommendedName>
</protein>
<gene>
    <name evidence="1" type="primary">bpt</name>
    <name type="ordered locus">BPP3539</name>
</gene>
<feature type="chain" id="PRO_0000195097" description="Aspartate/glutamate leucyltransferase">
    <location>
        <begin position="1"/>
        <end position="244"/>
    </location>
</feature>
<keyword id="KW-0012">Acyltransferase</keyword>
<keyword id="KW-0963">Cytoplasm</keyword>
<keyword id="KW-0808">Transferase</keyword>
<comment type="function">
    <text evidence="1">Functions in the N-end rule pathway of protein degradation where it conjugates Leu from its aminoacyl-tRNA to the N-termini of proteins containing an N-terminal aspartate or glutamate.</text>
</comment>
<comment type="catalytic activity">
    <reaction evidence="1">
        <text>N-terminal L-glutamyl-[protein] + L-leucyl-tRNA(Leu) = N-terminal L-leucyl-L-glutamyl-[protein] + tRNA(Leu) + H(+)</text>
        <dbReference type="Rhea" id="RHEA:50412"/>
        <dbReference type="Rhea" id="RHEA-COMP:9613"/>
        <dbReference type="Rhea" id="RHEA-COMP:9622"/>
        <dbReference type="Rhea" id="RHEA-COMP:12664"/>
        <dbReference type="Rhea" id="RHEA-COMP:12668"/>
        <dbReference type="ChEBI" id="CHEBI:15378"/>
        <dbReference type="ChEBI" id="CHEBI:64721"/>
        <dbReference type="ChEBI" id="CHEBI:78442"/>
        <dbReference type="ChEBI" id="CHEBI:78494"/>
        <dbReference type="ChEBI" id="CHEBI:133041"/>
        <dbReference type="EC" id="2.3.2.29"/>
    </reaction>
</comment>
<comment type="catalytic activity">
    <reaction evidence="1">
        <text>N-terminal L-aspartyl-[protein] + L-leucyl-tRNA(Leu) = N-terminal L-leucyl-L-aspartyl-[protein] + tRNA(Leu) + H(+)</text>
        <dbReference type="Rhea" id="RHEA:50420"/>
        <dbReference type="Rhea" id="RHEA-COMP:9613"/>
        <dbReference type="Rhea" id="RHEA-COMP:9622"/>
        <dbReference type="Rhea" id="RHEA-COMP:12669"/>
        <dbReference type="Rhea" id="RHEA-COMP:12674"/>
        <dbReference type="ChEBI" id="CHEBI:15378"/>
        <dbReference type="ChEBI" id="CHEBI:64720"/>
        <dbReference type="ChEBI" id="CHEBI:78442"/>
        <dbReference type="ChEBI" id="CHEBI:78494"/>
        <dbReference type="ChEBI" id="CHEBI:133042"/>
        <dbReference type="EC" id="2.3.2.29"/>
    </reaction>
</comment>
<comment type="subcellular location">
    <subcellularLocation>
        <location evidence="1">Cytoplasm</location>
    </subcellularLocation>
</comment>
<comment type="similarity">
    <text evidence="1">Belongs to the R-transferase family. Bpt subfamily.</text>
</comment>
<evidence type="ECO:0000255" key="1">
    <source>
        <dbReference type="HAMAP-Rule" id="MF_00689"/>
    </source>
</evidence>
<name>BPT_BORPA</name>
<organism>
    <name type="scientific">Bordetella parapertussis (strain 12822 / ATCC BAA-587 / NCTC 13253)</name>
    <dbReference type="NCBI Taxonomy" id="257311"/>
    <lineage>
        <taxon>Bacteria</taxon>
        <taxon>Pseudomonadati</taxon>
        <taxon>Pseudomonadota</taxon>
        <taxon>Betaproteobacteria</taxon>
        <taxon>Burkholderiales</taxon>
        <taxon>Alcaligenaceae</taxon>
        <taxon>Bordetella</taxon>
    </lineage>
</organism>
<proteinExistence type="inferred from homology"/>